<organism>
    <name type="scientific">Gibberella zeae (strain ATCC MYA-4620 / CBS 123657 / FGSC 9075 / NRRL 31084 / PH-1)</name>
    <name type="common">Wheat head blight fungus</name>
    <name type="synonym">Fusarium graminearum</name>
    <dbReference type="NCBI Taxonomy" id="229533"/>
    <lineage>
        <taxon>Eukaryota</taxon>
        <taxon>Fungi</taxon>
        <taxon>Dikarya</taxon>
        <taxon>Ascomycota</taxon>
        <taxon>Pezizomycotina</taxon>
        <taxon>Sordariomycetes</taxon>
        <taxon>Hypocreomycetidae</taxon>
        <taxon>Hypocreales</taxon>
        <taxon>Nectriaceae</taxon>
        <taxon>Fusarium</taxon>
    </lineage>
</organism>
<gene>
    <name evidence="9" type="primary">CYP51B</name>
    <name type="ORF">FG01000</name>
    <name type="ORF">FGRAMPH1_01T02507</name>
</gene>
<evidence type="ECO:0000250" key="1">
    <source>
        <dbReference type="UniProtKB" id="P10614"/>
    </source>
</evidence>
<evidence type="ECO:0000250" key="2">
    <source>
        <dbReference type="UniProtKB" id="Q4WNT5"/>
    </source>
</evidence>
<evidence type="ECO:0000255" key="3"/>
<evidence type="ECO:0000269" key="4">
    <source>
    </source>
</evidence>
<evidence type="ECO:0000269" key="5">
    <source>
    </source>
</evidence>
<evidence type="ECO:0000269" key="6">
    <source>
    </source>
</evidence>
<evidence type="ECO:0000269" key="7">
    <source>
    </source>
</evidence>
<evidence type="ECO:0000269" key="8">
    <source>
    </source>
</evidence>
<evidence type="ECO:0000303" key="9">
    <source>
    </source>
</evidence>
<evidence type="ECO:0000305" key="10"/>
<evidence type="ECO:0000305" key="11">
    <source>
    </source>
</evidence>
<evidence type="ECO:0000305" key="12">
    <source>
    </source>
</evidence>
<proteinExistence type="evidence at transcript level"/>
<sequence>MGLLQELAGHPLAQQFQELPLGQQVGIGFAVFLVLSVVLNVLNQLLFRNPNEPPMVFHWFPFVGSTITYGMDPPTFFRENRAKHGDVFTFILLGKKTTVAVGPAGNDFILNGKLKDVCAEEIYTVLTTPVFGKDVVYDCPNAKLMEQKKFMKIALTTEAFRSYVPIISSEVRDYFKRSPDFKGKSGIADIPKKMAEITIFTASHALQGSAIRSKFDESLAALYHDLDMGFTPINFMLHWAPLPWNRKRDHAQRTVAKIYMDTIKERRAKGNNESEHDMMKHLMNSTYKNGIRVPDHEVAHMMIALLMAGQHSSSSTSSWIMLRLAQYPHIMEELYQEQVKNLGADLPPLTYEDLAKLPLNQAIVKETLRLHAPIHSIMRAVKSPMPVPGTKYVIPTSHTLLAAPGVSATDSAFFPNPDEWDPHRWEADSPNFPRMASKGEDEEKIDYGYGLVSKGSASPYLPFGAGRHRCIGEHFANAQLQTIVAEVVREFKFRNVDGGHTLIDTDYASLFSRPLEPANIHWERRQ</sequence>
<comment type="function">
    <text evidence="1 2 4 6 12">Together with cyp51A and cyp51C, encodes the sterol 14alpha-demethylase that plays a critical role in the third module of ergosterol biosynthesis pathway, being ergosterol the major sterol component in fungal membranes that participates in a variety of functions (PubMed:20955812, PubMed:23442154). Essential for ascospore production (PubMed:23442154). The third module or late pathway involves the ergosterol synthesis itself through consecutive reactions that mainly occur in the endoplasmic reticulum (ER) membrane (By similarity). In filamentous fungi, during the initial step of this module, lanosterol (lanosta-8,24-dien-3beta-ol) can be metabolized to eburicol (By similarity). Sterol 14alpha-demethylase catalyzes the three-step oxidative removal of the 14alpha-methyl group (C-32) of both these sterols in the form of formate, and converts eburicol and lanosterol to 14-demethyleburicol (4,4,24-trimethylergosta-8,14,24(28)-trienol) and 4,4-dimethyl-5alpha-cholesta-8,14,24-trien-3beta-ol, respectively, which are further metabolized by other enzymes in the pathway to ergosterol (Probable). Can also use substrates not intrinsic to fungi, such as 24,25-dihydrolanosterol (DHL), producing 4,4'-dimethyl-8,14-cholestadien-3-beta-ol, but at lower rates than the endogenous substrates (By similarity).</text>
</comment>
<comment type="catalytic activity">
    <reaction evidence="12">
        <text>a 14alpha-methyl steroid + 3 reduced [NADPH--hemoprotein reductase] + 3 O2 = a Delta(14) steroid + formate + 3 oxidized [NADPH--hemoprotein reductase] + 4 H2O + 4 H(+)</text>
        <dbReference type="Rhea" id="RHEA:54028"/>
        <dbReference type="Rhea" id="RHEA-COMP:11964"/>
        <dbReference type="Rhea" id="RHEA-COMP:11965"/>
        <dbReference type="ChEBI" id="CHEBI:15377"/>
        <dbReference type="ChEBI" id="CHEBI:15378"/>
        <dbReference type="ChEBI" id="CHEBI:15379"/>
        <dbReference type="ChEBI" id="CHEBI:15740"/>
        <dbReference type="ChEBI" id="CHEBI:57618"/>
        <dbReference type="ChEBI" id="CHEBI:58210"/>
        <dbReference type="ChEBI" id="CHEBI:138029"/>
        <dbReference type="ChEBI" id="CHEBI:138031"/>
        <dbReference type="EC" id="1.14.14.154"/>
    </reaction>
    <physiologicalReaction direction="left-to-right" evidence="12">
        <dbReference type="Rhea" id="RHEA:54029"/>
    </physiologicalReaction>
</comment>
<comment type="catalytic activity">
    <reaction evidence="1">
        <text>a 14alpha-methyl steroid + reduced [NADPH--hemoprotein reductase] + O2 = a 14alpha-hydroxymethyl steroid + oxidized [NADPH--hemoprotein reductase] + H2O + H(+)</text>
        <dbReference type="Rhea" id="RHEA:68060"/>
        <dbReference type="Rhea" id="RHEA-COMP:11964"/>
        <dbReference type="Rhea" id="RHEA-COMP:11965"/>
        <dbReference type="ChEBI" id="CHEBI:15377"/>
        <dbReference type="ChEBI" id="CHEBI:15378"/>
        <dbReference type="ChEBI" id="CHEBI:15379"/>
        <dbReference type="ChEBI" id="CHEBI:57618"/>
        <dbReference type="ChEBI" id="CHEBI:58210"/>
        <dbReference type="ChEBI" id="CHEBI:138029"/>
        <dbReference type="ChEBI" id="CHEBI:176901"/>
    </reaction>
    <physiologicalReaction direction="left-to-right" evidence="1">
        <dbReference type="Rhea" id="RHEA:68061"/>
    </physiologicalReaction>
</comment>
<comment type="catalytic activity">
    <reaction evidence="1">
        <text>a 14alpha-hydroxymethyl steroid + reduced [NADPH--hemoprotein reductase] + O2 = a 14alpha-formyl steroid + oxidized [NADPH--hemoprotein reductase] + 2 H2O + H(+)</text>
        <dbReference type="Rhea" id="RHEA:68064"/>
        <dbReference type="Rhea" id="RHEA-COMP:11964"/>
        <dbReference type="Rhea" id="RHEA-COMP:11965"/>
        <dbReference type="ChEBI" id="CHEBI:15377"/>
        <dbReference type="ChEBI" id="CHEBI:15378"/>
        <dbReference type="ChEBI" id="CHEBI:15379"/>
        <dbReference type="ChEBI" id="CHEBI:57618"/>
        <dbReference type="ChEBI" id="CHEBI:58210"/>
        <dbReference type="ChEBI" id="CHEBI:176901"/>
        <dbReference type="ChEBI" id="CHEBI:176902"/>
    </reaction>
    <physiologicalReaction direction="left-to-right" evidence="1">
        <dbReference type="Rhea" id="RHEA:68065"/>
    </physiologicalReaction>
</comment>
<comment type="catalytic activity">
    <reaction evidence="1">
        <text>a 14alpha-formyl steroid + reduced [NADPH--hemoprotein reductase] + O2 = a Delta(14) steroid + formate + oxidized [NADPH--hemoprotein reductase] + H2O + 2 H(+)</text>
        <dbReference type="Rhea" id="RHEA:68068"/>
        <dbReference type="Rhea" id="RHEA-COMP:11964"/>
        <dbReference type="Rhea" id="RHEA-COMP:11965"/>
        <dbReference type="ChEBI" id="CHEBI:15377"/>
        <dbReference type="ChEBI" id="CHEBI:15378"/>
        <dbReference type="ChEBI" id="CHEBI:15379"/>
        <dbReference type="ChEBI" id="CHEBI:15740"/>
        <dbReference type="ChEBI" id="CHEBI:57618"/>
        <dbReference type="ChEBI" id="CHEBI:58210"/>
        <dbReference type="ChEBI" id="CHEBI:138031"/>
        <dbReference type="ChEBI" id="CHEBI:176902"/>
    </reaction>
    <physiologicalReaction direction="left-to-right" evidence="1">
        <dbReference type="Rhea" id="RHEA:68069"/>
    </physiologicalReaction>
</comment>
<comment type="catalytic activity">
    <reaction evidence="2">
        <text>lanosterol + 3 reduced [NADPH--hemoprotein reductase] + 3 O2 = 4,4-dimethyl-5alpha-cholesta-8,14,24-trien-3beta-ol + formate + 3 oxidized [NADPH--hemoprotein reductase] + 4 H2O + 4 H(+)</text>
        <dbReference type="Rhea" id="RHEA:25286"/>
        <dbReference type="Rhea" id="RHEA-COMP:11964"/>
        <dbReference type="Rhea" id="RHEA-COMP:11965"/>
        <dbReference type="ChEBI" id="CHEBI:15377"/>
        <dbReference type="ChEBI" id="CHEBI:15378"/>
        <dbReference type="ChEBI" id="CHEBI:15379"/>
        <dbReference type="ChEBI" id="CHEBI:15740"/>
        <dbReference type="ChEBI" id="CHEBI:16521"/>
        <dbReference type="ChEBI" id="CHEBI:17813"/>
        <dbReference type="ChEBI" id="CHEBI:57618"/>
        <dbReference type="ChEBI" id="CHEBI:58210"/>
        <dbReference type="EC" id="1.14.14.154"/>
    </reaction>
    <physiologicalReaction direction="left-to-right" evidence="2">
        <dbReference type="Rhea" id="RHEA:25287"/>
    </physiologicalReaction>
</comment>
<comment type="catalytic activity">
    <reaction evidence="1">
        <text>lanosterol + reduced [NADPH--hemoprotein reductase] + O2 = 32-hydroxylanosterol + oxidized [NADPH--hemoprotein reductase] + H2O + H(+)</text>
        <dbReference type="Rhea" id="RHEA:75103"/>
        <dbReference type="Rhea" id="RHEA-COMP:11964"/>
        <dbReference type="Rhea" id="RHEA-COMP:11965"/>
        <dbReference type="ChEBI" id="CHEBI:15377"/>
        <dbReference type="ChEBI" id="CHEBI:15378"/>
        <dbReference type="ChEBI" id="CHEBI:15379"/>
        <dbReference type="ChEBI" id="CHEBI:16521"/>
        <dbReference type="ChEBI" id="CHEBI:57618"/>
        <dbReference type="ChEBI" id="CHEBI:58210"/>
        <dbReference type="ChEBI" id="CHEBI:166806"/>
    </reaction>
    <physiologicalReaction direction="left-to-right" evidence="1">
        <dbReference type="Rhea" id="RHEA:75104"/>
    </physiologicalReaction>
</comment>
<comment type="catalytic activity">
    <reaction evidence="1">
        <text>32-hydroxylanosterol + reduced [NADPH--hemoprotein reductase] + O2 = 32-oxolanosterol + oxidized [NADPH--hemoprotein reductase] + 2 H2O + H(+)</text>
        <dbReference type="Rhea" id="RHEA:75107"/>
        <dbReference type="Rhea" id="RHEA-COMP:11964"/>
        <dbReference type="Rhea" id="RHEA-COMP:11965"/>
        <dbReference type="ChEBI" id="CHEBI:15377"/>
        <dbReference type="ChEBI" id="CHEBI:15378"/>
        <dbReference type="ChEBI" id="CHEBI:15379"/>
        <dbReference type="ChEBI" id="CHEBI:57618"/>
        <dbReference type="ChEBI" id="CHEBI:58210"/>
        <dbReference type="ChEBI" id="CHEBI:166681"/>
        <dbReference type="ChEBI" id="CHEBI:166806"/>
    </reaction>
    <physiologicalReaction direction="left-to-right" evidence="1">
        <dbReference type="Rhea" id="RHEA:75108"/>
    </physiologicalReaction>
</comment>
<comment type="catalytic activity">
    <reaction evidence="1">
        <text>32-oxolanosterol + reduced [NADPH--hemoprotein reductase] + O2 = 4,4-dimethyl-5alpha-cholesta-8,14,24-trien-3beta-ol + formate + oxidized [NADPH--hemoprotein reductase] + H2O + 2 H(+)</text>
        <dbReference type="Rhea" id="RHEA:75111"/>
        <dbReference type="Rhea" id="RHEA-COMP:11964"/>
        <dbReference type="Rhea" id="RHEA-COMP:11965"/>
        <dbReference type="ChEBI" id="CHEBI:15377"/>
        <dbReference type="ChEBI" id="CHEBI:15378"/>
        <dbReference type="ChEBI" id="CHEBI:15379"/>
        <dbReference type="ChEBI" id="CHEBI:15740"/>
        <dbReference type="ChEBI" id="CHEBI:17813"/>
        <dbReference type="ChEBI" id="CHEBI:57618"/>
        <dbReference type="ChEBI" id="CHEBI:58210"/>
        <dbReference type="ChEBI" id="CHEBI:166681"/>
    </reaction>
    <physiologicalReaction direction="left-to-right" evidence="1">
        <dbReference type="Rhea" id="RHEA:75112"/>
    </physiologicalReaction>
</comment>
<comment type="catalytic activity">
    <reaction evidence="12">
        <text>eburicol + 3 reduced [NADPH--hemoprotein reductase] + 3 O2 = 14-demethyleburicol + formate + 3 oxidized [NADPH--hemoprotein reductase] + 4 H2O + 4 H(+)</text>
        <dbReference type="Rhea" id="RHEA:75439"/>
        <dbReference type="Rhea" id="RHEA-COMP:11964"/>
        <dbReference type="Rhea" id="RHEA-COMP:11965"/>
        <dbReference type="ChEBI" id="CHEBI:15377"/>
        <dbReference type="ChEBI" id="CHEBI:15378"/>
        <dbReference type="ChEBI" id="CHEBI:15379"/>
        <dbReference type="ChEBI" id="CHEBI:15740"/>
        <dbReference type="ChEBI" id="CHEBI:57618"/>
        <dbReference type="ChEBI" id="CHEBI:58210"/>
        <dbReference type="ChEBI" id="CHEBI:70315"/>
        <dbReference type="ChEBI" id="CHEBI:194330"/>
    </reaction>
    <physiologicalReaction direction="left-to-right" evidence="12">
        <dbReference type="Rhea" id="RHEA:75440"/>
    </physiologicalReaction>
</comment>
<comment type="catalytic activity">
    <reaction evidence="1">
        <text>eburicol + reduced [NADPH--hemoprotein reductase] + O2 = 32-hydroxyeburicol + oxidized [NADPH--hemoprotein reductase] + H2O + H(+)</text>
        <dbReference type="Rhea" id="RHEA:75427"/>
        <dbReference type="Rhea" id="RHEA-COMP:11964"/>
        <dbReference type="Rhea" id="RHEA-COMP:11965"/>
        <dbReference type="ChEBI" id="CHEBI:15377"/>
        <dbReference type="ChEBI" id="CHEBI:15378"/>
        <dbReference type="ChEBI" id="CHEBI:15379"/>
        <dbReference type="ChEBI" id="CHEBI:57618"/>
        <dbReference type="ChEBI" id="CHEBI:58210"/>
        <dbReference type="ChEBI" id="CHEBI:70315"/>
        <dbReference type="ChEBI" id="CHEBI:194328"/>
    </reaction>
    <physiologicalReaction direction="left-to-right" evidence="1">
        <dbReference type="Rhea" id="RHEA:75428"/>
    </physiologicalReaction>
</comment>
<comment type="catalytic activity">
    <reaction evidence="1">
        <text>32-hydroxyeburicol + reduced [NADPH--hemoprotein reductase] + O2 = 32-oxoeburicol + oxidized [NADPH--hemoprotein reductase] + 2 H2O + H(+)</text>
        <dbReference type="Rhea" id="RHEA:75431"/>
        <dbReference type="Rhea" id="RHEA-COMP:11964"/>
        <dbReference type="Rhea" id="RHEA-COMP:11965"/>
        <dbReference type="ChEBI" id="CHEBI:15377"/>
        <dbReference type="ChEBI" id="CHEBI:15378"/>
        <dbReference type="ChEBI" id="CHEBI:15379"/>
        <dbReference type="ChEBI" id="CHEBI:57618"/>
        <dbReference type="ChEBI" id="CHEBI:58210"/>
        <dbReference type="ChEBI" id="CHEBI:194328"/>
        <dbReference type="ChEBI" id="CHEBI:194329"/>
    </reaction>
    <physiologicalReaction direction="left-to-right" evidence="1">
        <dbReference type="Rhea" id="RHEA:75432"/>
    </physiologicalReaction>
</comment>
<comment type="catalytic activity">
    <reaction evidence="1">
        <text>32-oxoeburicol + reduced [NADPH--hemoprotein reductase] + O2 = 14-demethyleburicol + formate + oxidized [NADPH--hemoprotein reductase] + H2O + 2 H(+)</text>
        <dbReference type="Rhea" id="RHEA:75435"/>
        <dbReference type="Rhea" id="RHEA-COMP:11964"/>
        <dbReference type="Rhea" id="RHEA-COMP:11965"/>
        <dbReference type="ChEBI" id="CHEBI:15377"/>
        <dbReference type="ChEBI" id="CHEBI:15378"/>
        <dbReference type="ChEBI" id="CHEBI:15379"/>
        <dbReference type="ChEBI" id="CHEBI:15740"/>
        <dbReference type="ChEBI" id="CHEBI:57618"/>
        <dbReference type="ChEBI" id="CHEBI:58210"/>
        <dbReference type="ChEBI" id="CHEBI:194329"/>
        <dbReference type="ChEBI" id="CHEBI:194330"/>
    </reaction>
    <physiologicalReaction direction="left-to-right" evidence="1">
        <dbReference type="Rhea" id="RHEA:75436"/>
    </physiologicalReaction>
</comment>
<comment type="cofactor">
    <cofactor evidence="1">
        <name>heme</name>
        <dbReference type="ChEBI" id="CHEBI:30413"/>
    </cofactor>
</comment>
<comment type="pathway">
    <text evidence="12">Steroid metabolism; ergosterol biosynthesis.</text>
</comment>
<comment type="subcellular location">
    <subcellularLocation>
        <location evidence="10">Endoplasmic reticulum membrane</location>
        <topology evidence="3">Single-pass membrane protein</topology>
    </subcellularLocation>
</comment>
<comment type="induction">
    <text evidence="5 8">Expression is increased in the absence of the C-24(28) sterol reductase ERG4 (PubMed:22947191). Expression is positively regulated by the FgSR transcription factor that targets gene promoters containing 2 conserved CGAA repeat sequences (PubMed:30874562).</text>
</comment>
<comment type="disruption phenotype">
    <text evidence="4 6 7">Decreases the amounts of 4,4-dimethylergosta-8,14,24(28)-trienol, the product of the Fusarium sterol 14-alpha demethylases; and leads to the accumulation of eburicol and 2 additional 14-methylated sterols, 4,4,14-trimethylergosta-trienol and 4,4,14-trimethylergosta-dienol (PubMed:23442154). Leads to reduced ability to produce conidia (PubMed:20955812). Affects ergosterol production in the presence of ebuconazole or triadimefon (PubMed:20955812). Host-induced gene silencing of the 3 genes encoding sterol C14-alpha-demethylase leads to strong resistance of host to Fusarium species (PubMed:24218613).</text>
</comment>
<comment type="miscellaneous">
    <text evidence="6">In Fusarium, the biosynthesis pathway of the sterol precursors leading to the prevalent sterol ergosterol differs from yeast. The ringsystem of lanosterol in S.cerevisiae is firstly demethylised in three enzymatic steps leading to the intermediate zymosterol and secondly a methyl group is added to zymosterol by the sterol 24-C-methyltransferase to form fecosterol. In Fusarium, lanosterol is firstly transmethylated by the sterol 24-C-methyltransferase leading to the intermediate eburicol and secondly demethylated in three steps to form fecosterol.</text>
</comment>
<comment type="similarity">
    <text evidence="10">Belongs to the cytochrome P450 family.</text>
</comment>
<accession>I1RBR4</accession>
<protein>
    <recommendedName>
        <fullName evidence="9">Sterol 14-alpha demethylase CYP51A</fullName>
        <ecNumber evidence="11">1.14.14.154</ecNumber>
    </recommendedName>
    <alternativeName>
        <fullName evidence="9">Ergosterol biosynthetic protein CYP51A</fullName>
    </alternativeName>
</protein>
<name>CP51B_GIBZE</name>
<keyword id="KW-0256">Endoplasmic reticulum</keyword>
<keyword id="KW-0349">Heme</keyword>
<keyword id="KW-0408">Iron</keyword>
<keyword id="KW-0444">Lipid biosynthesis</keyword>
<keyword id="KW-0443">Lipid metabolism</keyword>
<keyword id="KW-0472">Membrane</keyword>
<keyword id="KW-0479">Metal-binding</keyword>
<keyword id="KW-0503">Monooxygenase</keyword>
<keyword id="KW-0560">Oxidoreductase</keyword>
<keyword id="KW-1185">Reference proteome</keyword>
<keyword id="KW-0752">Steroid biosynthesis</keyword>
<keyword id="KW-0753">Steroid metabolism</keyword>
<keyword id="KW-0756">Sterol biosynthesis</keyword>
<keyword id="KW-1207">Sterol metabolism</keyword>
<keyword id="KW-0812">Transmembrane</keyword>
<keyword id="KW-1133">Transmembrane helix</keyword>
<dbReference type="EC" id="1.14.14.154" evidence="11"/>
<dbReference type="EMBL" id="HG970332">
    <property type="protein sequence ID" value="CEF73055.1"/>
    <property type="molecule type" value="Genomic_DNA"/>
</dbReference>
<dbReference type="RefSeq" id="XP_011316750.1">
    <property type="nucleotide sequence ID" value="XM_011318448.1"/>
</dbReference>
<dbReference type="SMR" id="I1RBR4"/>
<dbReference type="FunCoup" id="I1RBR4">
    <property type="interactions" value="571"/>
</dbReference>
<dbReference type="STRING" id="229533.I1RBR4"/>
<dbReference type="KEGG" id="fgr:FGSG_01000"/>
<dbReference type="VEuPathDB" id="FungiDB:FGRAMPH1_01G02507"/>
<dbReference type="eggNOG" id="KOG0684">
    <property type="taxonomic scope" value="Eukaryota"/>
</dbReference>
<dbReference type="HOGENOM" id="CLU_001570_15_0_1"/>
<dbReference type="InParanoid" id="I1RBR4"/>
<dbReference type="OrthoDB" id="40435at110618"/>
<dbReference type="UniPathway" id="UPA00768"/>
<dbReference type="PHI-base" id="PHI:2908"/>
<dbReference type="PHI-base" id="PHI:9825"/>
<dbReference type="Proteomes" id="UP000070720">
    <property type="component" value="Chromosome 1"/>
</dbReference>
<dbReference type="GO" id="GO:0005789">
    <property type="term" value="C:endoplasmic reticulum membrane"/>
    <property type="evidence" value="ECO:0007669"/>
    <property type="project" value="UniProtKB-SubCell"/>
</dbReference>
<dbReference type="GO" id="GO:0020037">
    <property type="term" value="F:heme binding"/>
    <property type="evidence" value="ECO:0007669"/>
    <property type="project" value="InterPro"/>
</dbReference>
<dbReference type="GO" id="GO:0005506">
    <property type="term" value="F:iron ion binding"/>
    <property type="evidence" value="ECO:0007669"/>
    <property type="project" value="InterPro"/>
</dbReference>
<dbReference type="GO" id="GO:0004497">
    <property type="term" value="F:monooxygenase activity"/>
    <property type="evidence" value="ECO:0007669"/>
    <property type="project" value="UniProtKB-KW"/>
</dbReference>
<dbReference type="GO" id="GO:0016705">
    <property type="term" value="F:oxidoreductase activity, acting on paired donors, with incorporation or reduction of molecular oxygen"/>
    <property type="evidence" value="ECO:0007669"/>
    <property type="project" value="InterPro"/>
</dbReference>
<dbReference type="GO" id="GO:0016126">
    <property type="term" value="P:sterol biosynthetic process"/>
    <property type="evidence" value="ECO:0007669"/>
    <property type="project" value="UniProtKB-UniPathway"/>
</dbReference>
<dbReference type="CDD" id="cd11042">
    <property type="entry name" value="CYP51-like"/>
    <property type="match status" value="1"/>
</dbReference>
<dbReference type="FunFam" id="1.10.630.10:FF:000033">
    <property type="entry name" value="14-alpha sterol demethylase"/>
    <property type="match status" value="1"/>
</dbReference>
<dbReference type="Gene3D" id="1.10.630.10">
    <property type="entry name" value="Cytochrome P450"/>
    <property type="match status" value="1"/>
</dbReference>
<dbReference type="InterPro" id="IPR050529">
    <property type="entry name" value="CYP450_sterol_14alpha_dmase"/>
</dbReference>
<dbReference type="InterPro" id="IPR001128">
    <property type="entry name" value="Cyt_P450"/>
</dbReference>
<dbReference type="InterPro" id="IPR017972">
    <property type="entry name" value="Cyt_P450_CS"/>
</dbReference>
<dbReference type="InterPro" id="IPR002403">
    <property type="entry name" value="Cyt_P450_E_grp-IV"/>
</dbReference>
<dbReference type="InterPro" id="IPR036396">
    <property type="entry name" value="Cyt_P450_sf"/>
</dbReference>
<dbReference type="PANTHER" id="PTHR24304:SF2">
    <property type="entry name" value="24-HYDROXYCHOLESTEROL 7-ALPHA-HYDROXYLASE"/>
    <property type="match status" value="1"/>
</dbReference>
<dbReference type="PANTHER" id="PTHR24304">
    <property type="entry name" value="CYTOCHROME P450 FAMILY 7"/>
    <property type="match status" value="1"/>
</dbReference>
<dbReference type="Pfam" id="PF00067">
    <property type="entry name" value="p450"/>
    <property type="match status" value="1"/>
</dbReference>
<dbReference type="PRINTS" id="PR00465">
    <property type="entry name" value="EP450IV"/>
</dbReference>
<dbReference type="PRINTS" id="PR00385">
    <property type="entry name" value="P450"/>
</dbReference>
<dbReference type="SUPFAM" id="SSF48264">
    <property type="entry name" value="Cytochrome P450"/>
    <property type="match status" value="1"/>
</dbReference>
<dbReference type="PROSITE" id="PS00086">
    <property type="entry name" value="CYTOCHROME_P450"/>
    <property type="match status" value="1"/>
</dbReference>
<feature type="chain" id="PRO_0000454395" description="Sterol 14-alpha demethylase CYP51A">
    <location>
        <begin position="1"/>
        <end position="526"/>
    </location>
</feature>
<feature type="transmembrane region" description="Helical" evidence="3">
    <location>
        <begin position="27"/>
        <end position="47"/>
    </location>
</feature>
<feature type="binding site" evidence="1">
    <location>
        <position position="123"/>
    </location>
    <ligand>
        <name>lanosterol</name>
        <dbReference type="ChEBI" id="CHEBI:16521"/>
    </ligand>
</feature>
<feature type="binding site" description="axial binding residue" evidence="1">
    <location>
        <position position="470"/>
    </location>
    <ligand>
        <name>heme</name>
        <dbReference type="ChEBI" id="CHEBI:30413"/>
    </ligand>
    <ligandPart>
        <name>Fe</name>
        <dbReference type="ChEBI" id="CHEBI:18248"/>
    </ligandPart>
</feature>
<reference key="1">
    <citation type="journal article" date="2007" name="Science">
        <title>The Fusarium graminearum genome reveals a link between localized polymorphism and pathogen specialization.</title>
        <authorList>
            <person name="Cuomo C.A."/>
            <person name="Gueldener U."/>
            <person name="Xu J.-R."/>
            <person name="Trail F."/>
            <person name="Turgeon B.G."/>
            <person name="Di Pietro A."/>
            <person name="Walton J.D."/>
            <person name="Ma L.-J."/>
            <person name="Baker S.E."/>
            <person name="Rep M."/>
            <person name="Adam G."/>
            <person name="Antoniw J."/>
            <person name="Baldwin T."/>
            <person name="Calvo S.E."/>
            <person name="Chang Y.-L."/>
            <person name="DeCaprio D."/>
            <person name="Gale L.R."/>
            <person name="Gnerre S."/>
            <person name="Goswami R.S."/>
            <person name="Hammond-Kosack K."/>
            <person name="Harris L.J."/>
            <person name="Hilburn K."/>
            <person name="Kennell J.C."/>
            <person name="Kroken S."/>
            <person name="Magnuson J.K."/>
            <person name="Mannhaupt G."/>
            <person name="Mauceli E.W."/>
            <person name="Mewes H.-W."/>
            <person name="Mitterbauer R."/>
            <person name="Muehlbauer G."/>
            <person name="Muensterkoetter M."/>
            <person name="Nelson D."/>
            <person name="O'Donnell K."/>
            <person name="Ouellet T."/>
            <person name="Qi W."/>
            <person name="Quesneville H."/>
            <person name="Roncero M.I.G."/>
            <person name="Seong K.-Y."/>
            <person name="Tetko I.V."/>
            <person name="Urban M."/>
            <person name="Waalwijk C."/>
            <person name="Ward T.J."/>
            <person name="Yao J."/>
            <person name="Birren B.W."/>
            <person name="Kistler H.C."/>
        </authorList>
    </citation>
    <scope>NUCLEOTIDE SEQUENCE [LARGE SCALE GENOMIC DNA]</scope>
    <source>
        <strain>ATCC MYA-4620 / CBS 123657 / FGSC 9075 / NRRL 31084 / PH-1</strain>
    </source>
</reference>
<reference key="2">
    <citation type="journal article" date="2010" name="Nature">
        <title>Comparative genomics reveals mobile pathogenicity chromosomes in Fusarium.</title>
        <authorList>
            <person name="Ma L.-J."/>
            <person name="van der Does H.C."/>
            <person name="Borkovich K.A."/>
            <person name="Coleman J.J."/>
            <person name="Daboussi M.-J."/>
            <person name="Di Pietro A."/>
            <person name="Dufresne M."/>
            <person name="Freitag M."/>
            <person name="Grabherr M."/>
            <person name="Henrissat B."/>
            <person name="Houterman P.M."/>
            <person name="Kang S."/>
            <person name="Shim W.-B."/>
            <person name="Woloshuk C."/>
            <person name="Xie X."/>
            <person name="Xu J.-R."/>
            <person name="Antoniw J."/>
            <person name="Baker S.E."/>
            <person name="Bluhm B.H."/>
            <person name="Breakspear A."/>
            <person name="Brown D.W."/>
            <person name="Butchko R.A.E."/>
            <person name="Chapman S."/>
            <person name="Coulson R."/>
            <person name="Coutinho P.M."/>
            <person name="Danchin E.G.J."/>
            <person name="Diener A."/>
            <person name="Gale L.R."/>
            <person name="Gardiner D.M."/>
            <person name="Goff S."/>
            <person name="Hammond-Kosack K.E."/>
            <person name="Hilburn K."/>
            <person name="Hua-Van A."/>
            <person name="Jonkers W."/>
            <person name="Kazan K."/>
            <person name="Kodira C.D."/>
            <person name="Koehrsen M."/>
            <person name="Kumar L."/>
            <person name="Lee Y.-H."/>
            <person name="Li L."/>
            <person name="Manners J.M."/>
            <person name="Miranda-Saavedra D."/>
            <person name="Mukherjee M."/>
            <person name="Park G."/>
            <person name="Park J."/>
            <person name="Park S.-Y."/>
            <person name="Proctor R.H."/>
            <person name="Regev A."/>
            <person name="Ruiz-Roldan M.C."/>
            <person name="Sain D."/>
            <person name="Sakthikumar S."/>
            <person name="Sykes S."/>
            <person name="Schwartz D.C."/>
            <person name="Turgeon B.G."/>
            <person name="Wapinski I."/>
            <person name="Yoder O."/>
            <person name="Young S."/>
            <person name="Zeng Q."/>
            <person name="Zhou S."/>
            <person name="Galagan J."/>
            <person name="Cuomo C.A."/>
            <person name="Kistler H.C."/>
            <person name="Rep M."/>
        </authorList>
    </citation>
    <scope>GENOME REANNOTATION</scope>
    <source>
        <strain>ATCC MYA-4620 / CBS 123657 / FGSC 9075 / NRRL 31084 / PH-1</strain>
    </source>
</reference>
<reference key="3">
    <citation type="journal article" date="2015" name="BMC Genomics">
        <title>The completed genome sequence of the pathogenic ascomycete fungus Fusarium graminearum.</title>
        <authorList>
            <person name="King R."/>
            <person name="Urban M."/>
            <person name="Hammond-Kosack M.C.U."/>
            <person name="Hassani-Pak K."/>
            <person name="Hammond-Kosack K.E."/>
        </authorList>
    </citation>
    <scope>NUCLEOTIDE SEQUENCE [LARGE SCALE GENOMIC DNA]</scope>
    <source>
        <strain>ATCC MYA-4620 / CBS 123657 / FGSC 9075 / NRRL 31084 / PH-1</strain>
    </source>
</reference>
<reference key="4">
    <citation type="journal article" date="2011" name="Fungal Genet. Biol.">
        <title>Paralogous cyp51 genes in Fusarium graminearum mediate differential sensitivity to sterol demethylation inhibitors.</title>
        <authorList>
            <person name="Liu X."/>
            <person name="Yu F."/>
            <person name="Schnabel G."/>
            <person name="Wu J."/>
            <person name="Wang Z."/>
            <person name="Ma Z."/>
        </authorList>
    </citation>
    <scope>FUNCTION</scope>
    <scope>DISRUPTION PHENOTYPE</scope>
</reference>
<reference key="5">
    <citation type="journal article" date="2013" name="Mol. Plant Pathol.">
        <title>Involvement of FgERG4 in ergosterol biosynthesis, vegetative differentiation and virulence in Fusarium graminearum.</title>
        <authorList>
            <person name="Liu X."/>
            <person name="Jiang J."/>
            <person name="Yin Y."/>
            <person name="Ma Z."/>
        </authorList>
    </citation>
    <scope>INDUCTION</scope>
</reference>
<reference key="6">
    <citation type="journal article" date="2013" name="New Phytol.">
        <title>Characterization of the sterol 14alpha-demethylases of Fusarium graminearum identifies a novel genus-specific CYP51 function.</title>
        <authorList>
            <person name="Fan J."/>
            <person name="Urban M."/>
            <person name="Parker J.E."/>
            <person name="Brewer H.C."/>
            <person name="Kelly S.L."/>
            <person name="Hammond-Kosack K.E."/>
            <person name="Fraaije B.A."/>
            <person name="Liu X."/>
            <person name="Cools H.J."/>
        </authorList>
    </citation>
    <scope>FUNCTION</scope>
    <scope>DISRUPTION PHENOTYPE</scope>
    <scope>PATHWAY</scope>
</reference>
<reference key="7">
    <citation type="journal article" date="2013" name="Proc. Natl. Acad. Sci. U.S.A.">
        <title>Host-induced gene silencing of cytochrome P450 lanosterol C14alpha-demethylase-encoding genes confers strong resistance to Fusarium species.</title>
        <authorList>
            <person name="Koch A."/>
            <person name="Kumar N."/>
            <person name="Weber L."/>
            <person name="Keller H."/>
            <person name="Imani J."/>
            <person name="Kogel K.H."/>
        </authorList>
    </citation>
    <scope>DISRUPTION PHENOTYPE</scope>
</reference>
<reference key="8">
    <citation type="journal article" date="2019" name="Nat. Commun.">
        <title>A phosphorylated transcription factor regulates sterol biosynthesis in Fusarium graminearum.</title>
        <authorList>
            <person name="Liu Z."/>
            <person name="Jian Y."/>
            <person name="Chen Y."/>
            <person name="Kistler H.C."/>
            <person name="He P."/>
            <person name="Ma Z."/>
            <person name="Yin Y."/>
        </authorList>
    </citation>
    <scope>INDUCTION</scope>
</reference>